<reference key="1">
    <citation type="submission" date="2000-03" db="EMBL/GenBank/DDBJ databases">
        <title>cDNA cloning of flavonol synthase and antisense suppression of expression in Lisianthus grandiflorum grise.</title>
        <authorList>
            <person name="Nielsen K.M."/>
        </authorList>
    </citation>
    <scope>NUCLEOTIDE SEQUENCE [MRNA]</scope>
</reference>
<organism>
    <name type="scientific">Eustoma exaltatum subsp. russellianum</name>
    <name type="common">Bluebells</name>
    <name type="synonym">Eustoma grandiflorum</name>
    <dbReference type="NCBI Taxonomy" id="52518"/>
    <lineage>
        <taxon>Eukaryota</taxon>
        <taxon>Viridiplantae</taxon>
        <taxon>Streptophyta</taxon>
        <taxon>Embryophyta</taxon>
        <taxon>Tracheophyta</taxon>
        <taxon>Spermatophyta</taxon>
        <taxon>Magnoliopsida</taxon>
        <taxon>eudicotyledons</taxon>
        <taxon>Gunneridae</taxon>
        <taxon>Pentapetalae</taxon>
        <taxon>asterids</taxon>
        <taxon>lamiids</taxon>
        <taxon>Gentianales</taxon>
        <taxon>Gentianaceae</taxon>
        <taxon>Chironieae</taxon>
        <taxon>Chironiinae</taxon>
        <taxon>Eustoma</taxon>
    </lineage>
</organism>
<proteinExistence type="evidence at transcript level"/>
<accession>Q9M547</accession>
<keyword id="KW-0963">Cytoplasm</keyword>
<keyword id="KW-0223">Dioxygenase</keyword>
<keyword id="KW-0284">Flavonoid biosynthesis</keyword>
<keyword id="KW-0408">Iron</keyword>
<keyword id="KW-0479">Metal-binding</keyword>
<keyword id="KW-0560">Oxidoreductase</keyword>
<keyword id="KW-0847">Vitamin C</keyword>
<protein>
    <recommendedName>
        <fullName>Flavonol synthase/flavanone 3-hydroxylase</fullName>
        <shortName>FLS</shortName>
        <ecNumber evidence="2">1.14.11.9</ecNumber>
        <ecNumber evidence="2">1.14.20.6</ecNumber>
    </recommendedName>
</protein>
<sequence length="334" mass="38081">MEVQRVQEIASLSKVIDTIPAEYIRSENEQPVISTVHGVVLEVPVIDLSDSDEKKIVGLVSEASKEWGIFQVVNHGIPNEVIRKLQEVGKHFFELPQEEKELIAKPEGSQSIEGYGTRLQKEVDGKKGWVDHLFHKIWPPSAINYQFWPKNPPAYREANEEYAKRLQLVVDNLFKYLSLGLDLEPNSFKDGAGGDDLVYLMKINYYPPCPRPDLALGVAHTDMSAITVLVPNEVPGLQVYKDGHWYDCKYIPNALIVHIGDQVEIMSNGKYKSVYHRTTVNKEKTRMSWPVFLEPPPDHEVGPIPKLVNEENPAKFKTKKYKDYAYCKLNKLPQ</sequence>
<comment type="function">
    <text evidence="1">Catalyzes the formation of flavonols from dihydroflavonols. It can act on dihydrokaempferol to produce kaempferol, on dihydroquercetin to produce quercitin and on dihydromyricetin to produce myricetin (By similarity).</text>
</comment>
<comment type="catalytic activity">
    <reaction evidence="2">
        <text>a (2R,3R)-dihydroflavonol + 2-oxoglutarate + O2 = a flavonol + succinate + CO2 + H2O</text>
        <dbReference type="Rhea" id="RHEA:21088"/>
        <dbReference type="ChEBI" id="CHEBI:15377"/>
        <dbReference type="ChEBI" id="CHEBI:15379"/>
        <dbReference type="ChEBI" id="CHEBI:16526"/>
        <dbReference type="ChEBI" id="CHEBI:16810"/>
        <dbReference type="ChEBI" id="CHEBI:28802"/>
        <dbReference type="ChEBI" id="CHEBI:30031"/>
        <dbReference type="ChEBI" id="CHEBI:138188"/>
        <dbReference type="EC" id="1.14.20.6"/>
    </reaction>
</comment>
<comment type="catalytic activity">
    <reaction evidence="2">
        <text>a (2S)-flavan-4-one + 2-oxoglutarate + O2 = a (2R,3R)-dihydroflavonol + succinate + CO2</text>
        <dbReference type="Rhea" id="RHEA:18621"/>
        <dbReference type="ChEBI" id="CHEBI:15379"/>
        <dbReference type="ChEBI" id="CHEBI:16526"/>
        <dbReference type="ChEBI" id="CHEBI:16810"/>
        <dbReference type="ChEBI" id="CHEBI:30031"/>
        <dbReference type="ChEBI" id="CHEBI:138188"/>
        <dbReference type="ChEBI" id="CHEBI:140377"/>
        <dbReference type="EC" id="1.14.11.9"/>
    </reaction>
</comment>
<comment type="cofactor">
    <cofactor evidence="1">
        <name>Fe cation</name>
        <dbReference type="ChEBI" id="CHEBI:24875"/>
    </cofactor>
    <text evidence="1">Binds 1 Fe cation per subunit.</text>
</comment>
<comment type="cofactor">
    <cofactor evidence="1">
        <name>L-ascorbate</name>
        <dbReference type="ChEBI" id="CHEBI:38290"/>
    </cofactor>
    <text evidence="1">Binds 1 ascorbate molecule per subunit.</text>
</comment>
<comment type="pathway">
    <text>Secondary metabolite biosynthesis; flavonoid biosynthesis.</text>
</comment>
<comment type="subcellular location">
    <subcellularLocation>
        <location evidence="1">Cytoplasm</location>
    </subcellularLocation>
</comment>
<comment type="similarity">
    <text evidence="4">Belongs to the iron/ascorbate-dependent oxidoreductase family.</text>
</comment>
<dbReference type="EC" id="1.14.11.9" evidence="2"/>
<dbReference type="EC" id="1.14.20.6" evidence="2"/>
<dbReference type="EMBL" id="AF240764">
    <property type="protein sequence ID" value="AAF64168.1"/>
    <property type="molecule type" value="mRNA"/>
</dbReference>
<dbReference type="SMR" id="Q9M547"/>
<dbReference type="UniPathway" id="UPA00154"/>
<dbReference type="GO" id="GO:0005737">
    <property type="term" value="C:cytoplasm"/>
    <property type="evidence" value="ECO:0007669"/>
    <property type="project" value="UniProtKB-SubCell"/>
</dbReference>
<dbReference type="GO" id="GO:0045486">
    <property type="term" value="F:flavanone 3-dioxygenase activity"/>
    <property type="evidence" value="ECO:0007669"/>
    <property type="project" value="UniProtKB-EC"/>
</dbReference>
<dbReference type="GO" id="GO:0045431">
    <property type="term" value="F:flavonol synthase activity"/>
    <property type="evidence" value="ECO:0007669"/>
    <property type="project" value="UniProtKB-EC"/>
</dbReference>
<dbReference type="GO" id="GO:0031418">
    <property type="term" value="F:L-ascorbic acid binding"/>
    <property type="evidence" value="ECO:0007669"/>
    <property type="project" value="UniProtKB-KW"/>
</dbReference>
<dbReference type="GO" id="GO:0046872">
    <property type="term" value="F:metal ion binding"/>
    <property type="evidence" value="ECO:0007669"/>
    <property type="project" value="UniProtKB-KW"/>
</dbReference>
<dbReference type="GO" id="GO:0009805">
    <property type="term" value="P:coumarin biosynthetic process"/>
    <property type="evidence" value="ECO:0007669"/>
    <property type="project" value="UniProtKB-ARBA"/>
</dbReference>
<dbReference type="GO" id="GO:0002238">
    <property type="term" value="P:response to molecule of fungal origin"/>
    <property type="evidence" value="ECO:0007669"/>
    <property type="project" value="UniProtKB-ARBA"/>
</dbReference>
<dbReference type="FunFam" id="2.60.120.330:FF:000009">
    <property type="entry name" value="Flavonol synthase"/>
    <property type="match status" value="1"/>
</dbReference>
<dbReference type="Gene3D" id="2.60.120.330">
    <property type="entry name" value="B-lactam Antibiotic, Isopenicillin N Synthase, Chain"/>
    <property type="match status" value="1"/>
</dbReference>
<dbReference type="InterPro" id="IPR026992">
    <property type="entry name" value="DIOX_N"/>
</dbReference>
<dbReference type="InterPro" id="IPR044861">
    <property type="entry name" value="IPNS-like_FE2OG_OXY"/>
</dbReference>
<dbReference type="InterPro" id="IPR027443">
    <property type="entry name" value="IPNS-like_sf"/>
</dbReference>
<dbReference type="InterPro" id="IPR005123">
    <property type="entry name" value="Oxoglu/Fe-dep_dioxygenase_dom"/>
</dbReference>
<dbReference type="InterPro" id="IPR050295">
    <property type="entry name" value="Plant_2OG-oxidoreductases"/>
</dbReference>
<dbReference type="PANTHER" id="PTHR47991">
    <property type="entry name" value="OXOGLUTARATE/IRON-DEPENDENT DIOXYGENASE"/>
    <property type="match status" value="1"/>
</dbReference>
<dbReference type="Pfam" id="PF03171">
    <property type="entry name" value="2OG-FeII_Oxy"/>
    <property type="match status" value="1"/>
</dbReference>
<dbReference type="Pfam" id="PF14226">
    <property type="entry name" value="DIOX_N"/>
    <property type="match status" value="1"/>
</dbReference>
<dbReference type="SUPFAM" id="SSF51197">
    <property type="entry name" value="Clavaminate synthase-like"/>
    <property type="match status" value="1"/>
</dbReference>
<dbReference type="PROSITE" id="PS51471">
    <property type="entry name" value="FE2OG_OXY"/>
    <property type="match status" value="1"/>
</dbReference>
<name>FLS_EUSER</name>
<evidence type="ECO:0000250" key="1"/>
<evidence type="ECO:0000250" key="2">
    <source>
        <dbReference type="UniProtKB" id="Q7XZQ6"/>
    </source>
</evidence>
<evidence type="ECO:0000255" key="3">
    <source>
        <dbReference type="PROSITE-ProRule" id="PRU00805"/>
    </source>
</evidence>
<evidence type="ECO:0000305" key="4"/>
<gene>
    <name type="primary">FLS</name>
</gene>
<feature type="chain" id="PRO_0000067293" description="Flavonol synthase/flavanone 3-hydroxylase">
    <location>
        <begin position="1"/>
        <end position="334"/>
    </location>
</feature>
<feature type="domain" description="Fe2OG dioxygenase" evidence="3">
    <location>
        <begin position="196"/>
        <end position="295"/>
    </location>
</feature>
<feature type="binding site" evidence="3">
    <location>
        <position position="220"/>
    </location>
    <ligand>
        <name>Fe cation</name>
        <dbReference type="ChEBI" id="CHEBI:24875"/>
    </ligand>
</feature>
<feature type="binding site" evidence="3">
    <location>
        <position position="222"/>
    </location>
    <ligand>
        <name>Fe cation</name>
        <dbReference type="ChEBI" id="CHEBI:24875"/>
    </ligand>
</feature>
<feature type="binding site" evidence="3">
    <location>
        <position position="276"/>
    </location>
    <ligand>
        <name>Fe cation</name>
        <dbReference type="ChEBI" id="CHEBI:24875"/>
    </ligand>
</feature>